<name>NU1M_PARTE</name>
<comment type="function">
    <text evidence="1">Core subunit of the mitochondrial membrane respiratory chain NADH dehydrogenase (Complex I) that is believed to belong to the minimal assembly required for catalysis. Complex I functions in the transfer of electrons from NADH to the respiratory chain. The immediate electron acceptor for the enzyme is believed to be ubiquinone (By similarity).</text>
</comment>
<comment type="catalytic activity">
    <reaction>
        <text>a ubiquinone + NADH + 5 H(+)(in) = a ubiquinol + NAD(+) + 4 H(+)(out)</text>
        <dbReference type="Rhea" id="RHEA:29091"/>
        <dbReference type="Rhea" id="RHEA-COMP:9565"/>
        <dbReference type="Rhea" id="RHEA-COMP:9566"/>
        <dbReference type="ChEBI" id="CHEBI:15378"/>
        <dbReference type="ChEBI" id="CHEBI:16389"/>
        <dbReference type="ChEBI" id="CHEBI:17976"/>
        <dbReference type="ChEBI" id="CHEBI:57540"/>
        <dbReference type="ChEBI" id="CHEBI:57945"/>
        <dbReference type="EC" id="7.1.1.2"/>
    </reaction>
</comment>
<comment type="subcellular location">
    <subcellularLocation>
        <location evidence="1">Mitochondrion inner membrane</location>
        <topology evidence="1">Multi-pass membrane protein</topology>
    </subcellularLocation>
</comment>
<comment type="similarity">
    <text evidence="3">Belongs to the complex I subunit 1 family.</text>
</comment>
<sequence>MLIYSIVLMLVVTLIIASITLLERKLLSLVQRRVGPNFVGYKGRLQYLADALKLFLKGVAIPSGANSFFFVAMPSLAGAVCYTFWMNSIWGPSLSMFDVEYNIVYASLLSILFGLCVMLTGYFSKNKYSVMAGLRAAILMLNLEIFLGIVFLNVCFLVESFSFAAFAVYQEIFWLIFLFFFLLSNILLVFLLEVNRTPFDLAEAESELVTGYTTEYGGFYFALFYLGEYFHLFFFSCLISVVFFGSWELLKPFLFLHNYTV</sequence>
<organism>
    <name type="scientific">Paramecium tetraurelia</name>
    <dbReference type="NCBI Taxonomy" id="5888"/>
    <lineage>
        <taxon>Eukaryota</taxon>
        <taxon>Sar</taxon>
        <taxon>Alveolata</taxon>
        <taxon>Ciliophora</taxon>
        <taxon>Intramacronucleata</taxon>
        <taxon>Oligohymenophorea</taxon>
        <taxon>Peniculida</taxon>
        <taxon>Parameciidae</taxon>
        <taxon>Paramecium</taxon>
    </lineage>
</organism>
<geneLocation type="mitochondrion"/>
<reference key="1">
    <citation type="journal article" date="1990" name="Nucleic Acids Res.">
        <title>Nucleotide sequence of the mitochondrial genome of Paramecium.</title>
        <authorList>
            <person name="Pritchard A.E."/>
            <person name="Seilhamer J.J."/>
            <person name="Mahalingam R."/>
            <person name="Sable C.L."/>
            <person name="Venuti S.E."/>
            <person name="Cummings D.J."/>
        </authorList>
    </citation>
    <scope>NUCLEOTIDE SEQUENCE [GENOMIC DNA]</scope>
    <source>
        <strain>Stock 51</strain>
    </source>
</reference>
<reference key="2">
    <citation type="journal article" date="1986" name="Gene">
        <title>Paramecium mitochondrial DNA sequences and RNA transcripts for cytochrome oxidase subunit I, URF1, and three ORFs adjacent to the replication origin.</title>
        <authorList>
            <person name="Pritchard A.E."/>
            <person name="Seilhamer J.J."/>
            <person name="Cummings D.J."/>
        </authorList>
    </citation>
    <scope>NUCLEOTIDE SEQUENCE [GENOMIC DNA] OF 1-166</scope>
</reference>
<evidence type="ECO:0000250" key="1"/>
<evidence type="ECO:0000255" key="2"/>
<evidence type="ECO:0000305" key="3"/>
<accession>P05513</accession>
<proteinExistence type="inferred from homology"/>
<feature type="chain" id="PRO_0000117447" description="NADH-ubiquinone oxidoreductase chain 1">
    <location>
        <begin position="1"/>
        <end position="261"/>
    </location>
</feature>
<feature type="transmembrane region" description="Helical" evidence="2">
    <location>
        <begin position="2"/>
        <end position="22"/>
    </location>
</feature>
<feature type="transmembrane region" description="Helical" evidence="2">
    <location>
        <begin position="69"/>
        <end position="89"/>
    </location>
</feature>
<feature type="transmembrane region" description="Helical" evidence="2">
    <location>
        <begin position="103"/>
        <end position="123"/>
    </location>
</feature>
<feature type="transmembrane region" description="Helical" evidence="2">
    <location>
        <begin position="138"/>
        <end position="158"/>
    </location>
</feature>
<feature type="transmembrane region" description="Helical" evidence="2">
    <location>
        <begin position="172"/>
        <end position="192"/>
    </location>
</feature>
<feature type="transmembrane region" description="Helical" evidence="2">
    <location>
        <begin position="224"/>
        <end position="244"/>
    </location>
</feature>
<protein>
    <recommendedName>
        <fullName>NADH-ubiquinone oxidoreductase chain 1</fullName>
        <ecNumber>7.1.1.2</ecNumber>
    </recommendedName>
    <alternativeName>
        <fullName>NADH dehydrogenase subunit 1</fullName>
    </alternativeName>
</protein>
<dbReference type="EC" id="7.1.1.2"/>
<dbReference type="EMBL" id="X15917">
    <property type="protein sequence ID" value="CAA34031.1"/>
    <property type="molecule type" value="Genomic_DNA"/>
</dbReference>
<dbReference type="EMBL" id="M15281">
    <property type="protein sequence ID" value="AAA79252.1"/>
    <property type="molecule type" value="Genomic_DNA"/>
</dbReference>
<dbReference type="PIR" id="S07752">
    <property type="entry name" value="S07752"/>
</dbReference>
<dbReference type="SMR" id="P05513"/>
<dbReference type="GO" id="GO:0005743">
    <property type="term" value="C:mitochondrial inner membrane"/>
    <property type="evidence" value="ECO:0007669"/>
    <property type="project" value="UniProtKB-SubCell"/>
</dbReference>
<dbReference type="GO" id="GO:0008137">
    <property type="term" value="F:NADH dehydrogenase (ubiquinone) activity"/>
    <property type="evidence" value="ECO:0007669"/>
    <property type="project" value="UniProtKB-EC"/>
</dbReference>
<dbReference type="InterPro" id="IPR001694">
    <property type="entry name" value="NADH_UbQ_OxRdtase_su1/FPO"/>
</dbReference>
<dbReference type="InterPro" id="IPR018086">
    <property type="entry name" value="NADH_UbQ_OxRdtase_su1_CS"/>
</dbReference>
<dbReference type="PANTHER" id="PTHR11432">
    <property type="entry name" value="NADH DEHYDROGENASE SUBUNIT 1"/>
    <property type="match status" value="1"/>
</dbReference>
<dbReference type="PANTHER" id="PTHR11432:SF3">
    <property type="entry name" value="NADH-UBIQUINONE OXIDOREDUCTASE CHAIN 1"/>
    <property type="match status" value="1"/>
</dbReference>
<dbReference type="Pfam" id="PF00146">
    <property type="entry name" value="NADHdh"/>
    <property type="match status" value="1"/>
</dbReference>
<dbReference type="PROSITE" id="PS00667">
    <property type="entry name" value="COMPLEX1_ND1_1"/>
    <property type="match status" value="1"/>
</dbReference>
<dbReference type="PROSITE" id="PS00668">
    <property type="entry name" value="COMPLEX1_ND1_2"/>
    <property type="match status" value="1"/>
</dbReference>
<gene>
    <name type="primary">ND1</name>
    <name type="synonym">NDH1</name>
</gene>
<keyword id="KW-0249">Electron transport</keyword>
<keyword id="KW-0472">Membrane</keyword>
<keyword id="KW-0496">Mitochondrion</keyword>
<keyword id="KW-0999">Mitochondrion inner membrane</keyword>
<keyword id="KW-0520">NAD</keyword>
<keyword id="KW-0679">Respiratory chain</keyword>
<keyword id="KW-1278">Translocase</keyword>
<keyword id="KW-0812">Transmembrane</keyword>
<keyword id="KW-1133">Transmembrane helix</keyword>
<keyword id="KW-0813">Transport</keyword>
<keyword id="KW-0830">Ubiquinone</keyword>